<proteinExistence type="inferred from homology"/>
<gene>
    <name type="primary">DEFB1</name>
</gene>
<reference key="1">
    <citation type="journal article" date="2002" name="Immunogenetics">
        <title>Beta-defensin 1 gene variability among non-human primates.</title>
        <authorList>
            <person name="Del Pero M."/>
            <person name="Boniotto M."/>
            <person name="Zuccon D."/>
            <person name="Cervella P."/>
            <person name="Spano A."/>
            <person name="Amoroso A."/>
            <person name="Crovella S."/>
        </authorList>
    </citation>
    <scope>NUCLEOTIDE SEQUENCE [GENOMIC DNA]</scope>
</reference>
<reference key="2">
    <citation type="submission" date="2006-11" db="EMBL/GenBank/DDBJ databases">
        <title>Evolution and sequence variation of human beta-defensin genes.</title>
        <authorList>
            <person name="Hollox E.J."/>
            <person name="Armour J.A.L."/>
        </authorList>
    </citation>
    <scope>NUCLEOTIDE SEQUENCE [GENOMIC DNA]</scope>
</reference>
<keyword id="KW-0044">Antibiotic</keyword>
<keyword id="KW-0929">Antimicrobial</keyword>
<keyword id="KW-0211">Defensin</keyword>
<keyword id="KW-1015">Disulfide bond</keyword>
<keyword id="KW-0472">Membrane</keyword>
<keyword id="KW-0964">Secreted</keyword>
<keyword id="KW-0732">Signal</keyword>
<name>DEFB1_HYLLA</name>
<feature type="signal peptide" evidence="3">
    <location>
        <begin position="1"/>
        <end position="21"/>
    </location>
</feature>
<feature type="propeptide" id="PRO_0000006903" evidence="1">
    <location>
        <begin position="22"/>
        <end position="32"/>
    </location>
</feature>
<feature type="peptide" id="PRO_0000006904" description="Beta-defensin 1">
    <location>
        <begin position="33"/>
        <end position="68"/>
    </location>
</feature>
<feature type="disulfide bond" evidence="1">
    <location>
        <begin position="37"/>
        <end position="66"/>
    </location>
</feature>
<feature type="disulfide bond" evidence="1">
    <location>
        <begin position="44"/>
        <end position="59"/>
    </location>
</feature>
<feature type="disulfide bond" evidence="1">
    <location>
        <begin position="49"/>
        <end position="67"/>
    </location>
</feature>
<evidence type="ECO:0000250" key="1"/>
<evidence type="ECO:0000250" key="2">
    <source>
        <dbReference type="UniProtKB" id="P60022"/>
    </source>
</evidence>
<evidence type="ECO:0000255" key="3"/>
<evidence type="ECO:0000305" key="4"/>
<dbReference type="EMBL" id="AY033753">
    <property type="protein sequence ID" value="AAK61465.1"/>
    <property type="molecule type" value="Genomic_DNA"/>
</dbReference>
<dbReference type="EMBL" id="AY033738">
    <property type="protein sequence ID" value="AAK61465.1"/>
    <property type="status" value="JOINED"/>
    <property type="molecule type" value="Genomic_DNA"/>
</dbReference>
<dbReference type="EMBL" id="AM410100">
    <property type="protein sequence ID" value="CAL68915.1"/>
    <property type="molecule type" value="Genomic_DNA"/>
</dbReference>
<dbReference type="SMR" id="Q7JGM1"/>
<dbReference type="GO" id="GO:0005615">
    <property type="term" value="C:extracellular space"/>
    <property type="evidence" value="ECO:0007669"/>
    <property type="project" value="TreeGrafter"/>
</dbReference>
<dbReference type="GO" id="GO:0016020">
    <property type="term" value="C:membrane"/>
    <property type="evidence" value="ECO:0000250"/>
    <property type="project" value="UniProtKB"/>
</dbReference>
<dbReference type="GO" id="GO:1990742">
    <property type="term" value="C:microvesicle"/>
    <property type="evidence" value="ECO:0000250"/>
    <property type="project" value="UniProtKB"/>
</dbReference>
<dbReference type="GO" id="GO:0097225">
    <property type="term" value="C:sperm midpiece"/>
    <property type="evidence" value="ECO:0000250"/>
    <property type="project" value="UniProtKB"/>
</dbReference>
<dbReference type="GO" id="GO:0031731">
    <property type="term" value="F:CCR6 chemokine receptor binding"/>
    <property type="evidence" value="ECO:0000250"/>
    <property type="project" value="UniProtKB"/>
</dbReference>
<dbReference type="GO" id="GO:0042802">
    <property type="term" value="F:identical protein binding"/>
    <property type="evidence" value="ECO:0000250"/>
    <property type="project" value="UniProtKB"/>
</dbReference>
<dbReference type="GO" id="GO:0019722">
    <property type="term" value="P:calcium-mediated signaling"/>
    <property type="evidence" value="ECO:0000250"/>
    <property type="project" value="UniProtKB"/>
</dbReference>
<dbReference type="GO" id="GO:0050829">
    <property type="term" value="P:defense response to Gram-negative bacterium"/>
    <property type="evidence" value="ECO:0000250"/>
    <property type="project" value="UniProtKB"/>
</dbReference>
<dbReference type="GO" id="GO:0050830">
    <property type="term" value="P:defense response to Gram-positive bacterium"/>
    <property type="evidence" value="ECO:0000250"/>
    <property type="project" value="UniProtKB"/>
</dbReference>
<dbReference type="GO" id="GO:0002227">
    <property type="term" value="P:innate immune response in mucosa"/>
    <property type="evidence" value="ECO:0007669"/>
    <property type="project" value="TreeGrafter"/>
</dbReference>
<dbReference type="GO" id="GO:0060474">
    <property type="term" value="P:positive regulation of flagellated sperm motility involved in capacitation"/>
    <property type="evidence" value="ECO:0000250"/>
    <property type="project" value="UniProtKB"/>
</dbReference>
<dbReference type="FunFam" id="3.10.360.10:FF:000001">
    <property type="entry name" value="Beta-defensin 1"/>
    <property type="match status" value="1"/>
</dbReference>
<dbReference type="Gene3D" id="3.10.360.10">
    <property type="entry name" value="Antimicrobial Peptide, Beta-defensin 2, Chain A"/>
    <property type="match status" value="1"/>
</dbReference>
<dbReference type="InterPro" id="IPR001855">
    <property type="entry name" value="Defensin_beta-like"/>
</dbReference>
<dbReference type="PANTHER" id="PTHR21388:SF9">
    <property type="entry name" value="BETA-DEFENSIN 1"/>
    <property type="match status" value="1"/>
</dbReference>
<dbReference type="PANTHER" id="PTHR21388">
    <property type="entry name" value="BETA-DEFENSIN-RELATED"/>
    <property type="match status" value="1"/>
</dbReference>
<dbReference type="Pfam" id="PF00711">
    <property type="entry name" value="Defensin_beta"/>
    <property type="match status" value="1"/>
</dbReference>
<dbReference type="SUPFAM" id="SSF57392">
    <property type="entry name" value="Defensin-like"/>
    <property type="match status" value="1"/>
</dbReference>
<protein>
    <recommendedName>
        <fullName>Beta-defensin 1</fullName>
        <shortName>BD-1</shortName>
    </recommendedName>
    <alternativeName>
        <fullName>Defensin, beta 1</fullName>
    </alternativeName>
</protein>
<comment type="function">
    <text evidence="2">Has bactericidal activity. May act as a ligand for C-C chemokine receptor CCR6. Positively regulates the sperm motility and bactericidal activity in a CCR6-dependent manner. Binds to CCR6 and triggers Ca2+ mobilization in the sperm which is important for its motility.</text>
</comment>
<comment type="subunit">
    <text evidence="2">Monomer. Homodimer.</text>
</comment>
<comment type="subcellular location">
    <subcellularLocation>
        <location evidence="2">Secreted</location>
    </subcellularLocation>
    <subcellularLocation>
        <location evidence="2">Membrane</location>
    </subcellularLocation>
    <text evidence="2">Associates with tumor cell membrane-derived microvesicles.</text>
</comment>
<comment type="similarity">
    <text evidence="4">Belongs to the beta-defensin family.</text>
</comment>
<accession>Q7JGM1</accession>
<accession>A4H1Z5</accession>
<sequence length="68" mass="7535">MRTSYLLLFTLCLLLSEMASGDNFLTGLGHRSDHYNCVRSGGQCLYSACPIYTKIQGTCYQGKAKCCK</sequence>
<organism>
    <name type="scientific">Hylobates lar</name>
    <name type="common">Lar gibbon</name>
    <name type="synonym">White-handed gibbon</name>
    <dbReference type="NCBI Taxonomy" id="9580"/>
    <lineage>
        <taxon>Eukaryota</taxon>
        <taxon>Metazoa</taxon>
        <taxon>Chordata</taxon>
        <taxon>Craniata</taxon>
        <taxon>Vertebrata</taxon>
        <taxon>Euteleostomi</taxon>
        <taxon>Mammalia</taxon>
        <taxon>Eutheria</taxon>
        <taxon>Euarchontoglires</taxon>
        <taxon>Primates</taxon>
        <taxon>Haplorrhini</taxon>
        <taxon>Catarrhini</taxon>
        <taxon>Hylobatidae</taxon>
        <taxon>Hylobates</taxon>
    </lineage>
</organism>